<organism>
    <name type="scientific">Aspergillus clavatus (strain ATCC 1007 / CBS 513.65 / DSM 816 / NCTC 3887 / NRRL 1 / QM 1276 / 107)</name>
    <dbReference type="NCBI Taxonomy" id="344612"/>
    <lineage>
        <taxon>Eukaryota</taxon>
        <taxon>Fungi</taxon>
        <taxon>Dikarya</taxon>
        <taxon>Ascomycota</taxon>
        <taxon>Pezizomycotina</taxon>
        <taxon>Eurotiomycetes</taxon>
        <taxon>Eurotiomycetidae</taxon>
        <taxon>Eurotiales</taxon>
        <taxon>Aspergillaceae</taxon>
        <taxon>Aspergillus</taxon>
        <taxon>Aspergillus subgen. Fumigati</taxon>
    </lineage>
</organism>
<evidence type="ECO:0000250" key="1"/>
<evidence type="ECO:0000255" key="2"/>
<evidence type="ECO:0000256" key="3">
    <source>
        <dbReference type="SAM" id="MobiDB-lite"/>
    </source>
</evidence>
<evidence type="ECO:0000305" key="4"/>
<name>DAPB_ASPCL</name>
<sequence length="914" mass="102054">MATFSDHETSEFLPMTRPRSTSSASQTSSDSGLSSEPAFQEDQKQPFSAPNGTTGMDNGDRYRDLEDGEAEANEPFLASSKKAATGGRARRIFWLLVLLCFGGWLLAFVLFLTGGRANYQSASDALQAQEPESASGSTSSGKPVTLEQVLTGQWSPRYHAITWVAGPNDEDGLLVEKGGGEQEGYLRVDDIQSRKNKDGKGGRVLMRKPIVHVDGKLVVPGNAWPSPDLKKVLLISDQEKNWRHSFTGKYWVLDVESQTAQPLDPSLPDGRVQLALWSPKSDAVIFVRENDVYLRKLSSDRVVTVTKDGGENLFYGVPDWVYEEEVISGRSVTWWSNDAKYVAFFRTNESAVSDFPVDYFLSRPSGKKPDPGLENYPEVRQIKYPKAGASNPVVDLQFYDVEKNEVFSVDVADDFDNDDRIIIEVVWASEGKVLVRSTNRESDILKVFLIDTKSRTGRVVRTEDVASLDGGWVEPSQSTRFIPADPSNGRPDDGYIDTVPYKGYDHLAYFSPLDSPKGVMLTSGDWEVVDAPAAVDLQRGLVYFVAAKEAPTERHIYRVQLDGSNMTAITDTSKPGYFGVSFSHGAGYALLTYNGPSVPWQAIINTHGDEITFEERIEENPQLTSMIEAYALPTEIYQNVTVDGFTLQVVERRPPHFNPAKKYPVLFYLYGGPGSQTVDRKFSIDFQSYVASSLGYIVVTVDGRGTGHIGRKARCIVRGNLGFYEARDQIATAKIWAAKSYVDESRMAIWGWSFGGFMTLKTLELDAGETFQYGMAVAPVTDWRFYDSIYSERYMHTPQHNPSGYANSTITDMAALTHPVRFLVMHGTADDNVHLQNTLVLTDKLDLSNVKNYDLHFFPDSDHSIFFHNAHAMVYDRLSSWLVNAFNGEWHRIAHPVPGESMWTRFKRSLPVLV</sequence>
<dbReference type="EC" id="3.4.14.5"/>
<dbReference type="EMBL" id="DS027056">
    <property type="protein sequence ID" value="EAW09375.1"/>
    <property type="molecule type" value="Genomic_DNA"/>
</dbReference>
<dbReference type="RefSeq" id="XP_001270801.1">
    <property type="nucleotide sequence ID" value="XM_001270800.1"/>
</dbReference>
<dbReference type="SMR" id="A1CJQ1"/>
<dbReference type="STRING" id="344612.A1CJQ1"/>
<dbReference type="ESTHER" id="aspcl-dapb">
    <property type="family name" value="DPP4N_Peptidase_S9"/>
</dbReference>
<dbReference type="MEROPS" id="S09.006"/>
<dbReference type="GlyCosmos" id="A1CJQ1">
    <property type="glycosylation" value="4 sites, No reported glycans"/>
</dbReference>
<dbReference type="EnsemblFungi" id="EAW09375">
    <property type="protein sequence ID" value="EAW09375"/>
    <property type="gene ID" value="ACLA_035780"/>
</dbReference>
<dbReference type="GeneID" id="4703117"/>
<dbReference type="KEGG" id="act:ACLA_035780"/>
<dbReference type="VEuPathDB" id="FungiDB:ACLA_035780"/>
<dbReference type="eggNOG" id="KOG2100">
    <property type="taxonomic scope" value="Eukaryota"/>
</dbReference>
<dbReference type="HOGENOM" id="CLU_006105_0_1_1"/>
<dbReference type="OMA" id="MRTPQEN"/>
<dbReference type="OrthoDB" id="16520at2759"/>
<dbReference type="Proteomes" id="UP000006701">
    <property type="component" value="Unassembled WGS sequence"/>
</dbReference>
<dbReference type="GO" id="GO:0000329">
    <property type="term" value="C:fungal-type vacuole membrane"/>
    <property type="evidence" value="ECO:0007669"/>
    <property type="project" value="EnsemblFungi"/>
</dbReference>
<dbReference type="GO" id="GO:0005886">
    <property type="term" value="C:plasma membrane"/>
    <property type="evidence" value="ECO:0007669"/>
    <property type="project" value="TreeGrafter"/>
</dbReference>
<dbReference type="GO" id="GO:0004177">
    <property type="term" value="F:aminopeptidase activity"/>
    <property type="evidence" value="ECO:0007669"/>
    <property type="project" value="UniProtKB-KW"/>
</dbReference>
<dbReference type="GO" id="GO:0008239">
    <property type="term" value="F:dipeptidyl-peptidase activity"/>
    <property type="evidence" value="ECO:0007669"/>
    <property type="project" value="UniProtKB-EC"/>
</dbReference>
<dbReference type="GO" id="GO:0008236">
    <property type="term" value="F:serine-type peptidase activity"/>
    <property type="evidence" value="ECO:0007669"/>
    <property type="project" value="UniProtKB-KW"/>
</dbReference>
<dbReference type="GO" id="GO:0006508">
    <property type="term" value="P:proteolysis"/>
    <property type="evidence" value="ECO:0007669"/>
    <property type="project" value="UniProtKB-KW"/>
</dbReference>
<dbReference type="FunFam" id="3.40.50.1820:FF:000003">
    <property type="entry name" value="Dipeptidyl peptidase 4"/>
    <property type="match status" value="1"/>
</dbReference>
<dbReference type="Gene3D" id="3.40.50.1820">
    <property type="entry name" value="alpha/beta hydrolase"/>
    <property type="match status" value="1"/>
</dbReference>
<dbReference type="Gene3D" id="2.140.10.30">
    <property type="entry name" value="Dipeptidylpeptidase IV, N-terminal domain"/>
    <property type="match status" value="1"/>
</dbReference>
<dbReference type="InterPro" id="IPR029058">
    <property type="entry name" value="AB_hydrolase_fold"/>
</dbReference>
<dbReference type="InterPro" id="IPR001375">
    <property type="entry name" value="Peptidase_S9_cat"/>
</dbReference>
<dbReference type="InterPro" id="IPR002469">
    <property type="entry name" value="Peptidase_S9B_N"/>
</dbReference>
<dbReference type="InterPro" id="IPR050278">
    <property type="entry name" value="Serine_Prot_S9B/DPPIV"/>
</dbReference>
<dbReference type="PANTHER" id="PTHR11731:SF200">
    <property type="entry name" value="DIPEPTIDYL PEPTIDASE 10, ISOFORM B"/>
    <property type="match status" value="1"/>
</dbReference>
<dbReference type="PANTHER" id="PTHR11731">
    <property type="entry name" value="PROTEASE FAMILY S9B,C DIPEPTIDYL-PEPTIDASE IV-RELATED"/>
    <property type="match status" value="1"/>
</dbReference>
<dbReference type="Pfam" id="PF00930">
    <property type="entry name" value="DPPIV_N"/>
    <property type="match status" value="1"/>
</dbReference>
<dbReference type="Pfam" id="PF00326">
    <property type="entry name" value="Peptidase_S9"/>
    <property type="match status" value="1"/>
</dbReference>
<dbReference type="SUPFAM" id="SSF53474">
    <property type="entry name" value="alpha/beta-Hydrolases"/>
    <property type="match status" value="1"/>
</dbReference>
<dbReference type="SUPFAM" id="SSF82171">
    <property type="entry name" value="DPP6 N-terminal domain-like"/>
    <property type="match status" value="1"/>
</dbReference>
<feature type="chain" id="PRO_0000412132" description="Probable dipeptidyl-aminopeptidase B">
    <location>
        <begin position="1"/>
        <end position="914"/>
    </location>
</feature>
<feature type="topological domain" description="Cytoplasmic" evidence="2">
    <location>
        <begin position="1"/>
        <end position="91"/>
    </location>
</feature>
<feature type="transmembrane region" description="Helical; Signal-anchor for type II membrane protein" evidence="2">
    <location>
        <begin position="92"/>
        <end position="112"/>
    </location>
</feature>
<feature type="topological domain" description="Vacuolar" evidence="2">
    <location>
        <begin position="113"/>
        <end position="914"/>
    </location>
</feature>
<feature type="region of interest" description="Disordered" evidence="3">
    <location>
        <begin position="1"/>
        <end position="63"/>
    </location>
</feature>
<feature type="compositionally biased region" description="Basic and acidic residues" evidence="3">
    <location>
        <begin position="1"/>
        <end position="10"/>
    </location>
</feature>
<feature type="compositionally biased region" description="Low complexity" evidence="3">
    <location>
        <begin position="20"/>
        <end position="35"/>
    </location>
</feature>
<feature type="compositionally biased region" description="Polar residues" evidence="3">
    <location>
        <begin position="45"/>
        <end position="56"/>
    </location>
</feature>
<feature type="active site" description="Charge relay system" evidence="1">
    <location>
        <position position="753"/>
    </location>
</feature>
<feature type="active site" description="Charge relay system" evidence="1">
    <location>
        <position position="830"/>
    </location>
</feature>
<feature type="active site" description="Charge relay system" evidence="1">
    <location>
        <position position="863"/>
    </location>
</feature>
<feature type="glycosylation site" description="N-linked (GlcNAc...) asparagine" evidence="2">
    <location>
        <position position="348"/>
    </location>
</feature>
<feature type="glycosylation site" description="N-linked (GlcNAc...) asparagine" evidence="2">
    <location>
        <position position="565"/>
    </location>
</feature>
<feature type="glycosylation site" description="N-linked (GlcNAc...) asparagine" evidence="2">
    <location>
        <position position="639"/>
    </location>
</feature>
<feature type="glycosylation site" description="N-linked (GlcNAc...) asparagine" evidence="2">
    <location>
        <position position="807"/>
    </location>
</feature>
<comment type="function">
    <text evidence="1">Type IV dipeptidyl-peptidase which removes N-terminal dipeptides sequentially from polypeptides having unsubstituted N-termini provided that the penultimate residue is proline.</text>
</comment>
<comment type="catalytic activity">
    <reaction>
        <text>Release of an N-terminal dipeptide, Xaa-Yaa-|-Zaa-, from a polypeptide, preferentially when Yaa is Pro, provided Zaa is neither Pro nor hydroxyproline.</text>
        <dbReference type="EC" id="3.4.14.5"/>
    </reaction>
</comment>
<comment type="subcellular location">
    <subcellularLocation>
        <location evidence="1">Vacuole membrane</location>
        <topology evidence="1">Single-pass type II membrane protein</topology>
    </subcellularLocation>
    <text evidence="1">Lysosome-like vacuoles.</text>
</comment>
<comment type="similarity">
    <text evidence="4">Belongs to the peptidase S9B family.</text>
</comment>
<keyword id="KW-0031">Aminopeptidase</keyword>
<keyword id="KW-0325">Glycoprotein</keyword>
<keyword id="KW-0378">Hydrolase</keyword>
<keyword id="KW-0472">Membrane</keyword>
<keyword id="KW-0645">Protease</keyword>
<keyword id="KW-1185">Reference proteome</keyword>
<keyword id="KW-0720">Serine protease</keyword>
<keyword id="KW-0735">Signal-anchor</keyword>
<keyword id="KW-0812">Transmembrane</keyword>
<keyword id="KW-1133">Transmembrane helix</keyword>
<keyword id="KW-0926">Vacuole</keyword>
<accession>A1CJQ1</accession>
<reference key="1">
    <citation type="journal article" date="2008" name="PLoS Genet.">
        <title>Genomic islands in the pathogenic filamentous fungus Aspergillus fumigatus.</title>
        <authorList>
            <person name="Fedorova N.D."/>
            <person name="Khaldi N."/>
            <person name="Joardar V.S."/>
            <person name="Maiti R."/>
            <person name="Amedeo P."/>
            <person name="Anderson M.J."/>
            <person name="Crabtree J."/>
            <person name="Silva J.C."/>
            <person name="Badger J.H."/>
            <person name="Albarraq A."/>
            <person name="Angiuoli S."/>
            <person name="Bussey H."/>
            <person name="Bowyer P."/>
            <person name="Cotty P.J."/>
            <person name="Dyer P.S."/>
            <person name="Egan A."/>
            <person name="Galens K."/>
            <person name="Fraser-Liggett C.M."/>
            <person name="Haas B.J."/>
            <person name="Inman J.M."/>
            <person name="Kent R."/>
            <person name="Lemieux S."/>
            <person name="Malavazi I."/>
            <person name="Orvis J."/>
            <person name="Roemer T."/>
            <person name="Ronning C.M."/>
            <person name="Sundaram J.P."/>
            <person name="Sutton G."/>
            <person name="Turner G."/>
            <person name="Venter J.C."/>
            <person name="White O.R."/>
            <person name="Whitty B.R."/>
            <person name="Youngman P."/>
            <person name="Wolfe K.H."/>
            <person name="Goldman G.H."/>
            <person name="Wortman J.R."/>
            <person name="Jiang B."/>
            <person name="Denning D.W."/>
            <person name="Nierman W.C."/>
        </authorList>
    </citation>
    <scope>NUCLEOTIDE SEQUENCE [LARGE SCALE GENOMIC DNA]</scope>
    <source>
        <strain>ATCC 1007 / CBS 513.65 / DSM 816 / NCTC 3887 / NRRL 1 / QM 1276 / 107</strain>
    </source>
</reference>
<protein>
    <recommendedName>
        <fullName>Probable dipeptidyl-aminopeptidase B</fullName>
        <shortName>DPAP B</shortName>
        <ecNumber>3.4.14.5</ecNumber>
    </recommendedName>
</protein>
<proteinExistence type="inferred from homology"/>
<gene>
    <name type="primary">dapB</name>
    <name type="ORF">ACLA_035780</name>
</gene>